<accession>B5FSM5</accession>
<evidence type="ECO:0000255" key="1">
    <source>
        <dbReference type="HAMAP-Rule" id="MF_01590"/>
    </source>
</evidence>
<sequence length="323" mass="37063">MIEFGNFYQLIAKNHLSHWLETLPAQIAAWQREQQHGLFKQWSNAVEFLPEITPWRLDLLHSVTAESETPLSEGQLKRIDTLLRNLMPWRKGPFSLYGVDIDTEWRSDWKWDRVLPHLSDLTGRTILDVGCGSGYHLWRMIGAGAHLAVGIDPTQLFLCQFEAVRKLLGNDQRAHLLPLGIEQLPALKAFDTVFSMGVLYHRRSPLEHLWQLKDQLVNEGELVLETLVVDGDENTVLVPGDRYAQMRNVYFIPSAPALKKWLEKCGFIDVRIADVCVTTTEEQRRTEWMVTESLADFLDPNDRSKTVEGYPAPQRAVLIARKP</sequence>
<dbReference type="EC" id="2.5.1.-" evidence="1"/>
<dbReference type="EMBL" id="CP001144">
    <property type="protein sequence ID" value="ACH76189.1"/>
    <property type="molecule type" value="Genomic_DNA"/>
</dbReference>
<dbReference type="RefSeq" id="WP_000569026.1">
    <property type="nucleotide sequence ID" value="NC_011205.1"/>
</dbReference>
<dbReference type="SMR" id="B5FSM5"/>
<dbReference type="KEGG" id="sed:SeD_A1341"/>
<dbReference type="HOGENOM" id="CLU_052665_0_0_6"/>
<dbReference type="Proteomes" id="UP000008322">
    <property type="component" value="Chromosome"/>
</dbReference>
<dbReference type="GO" id="GO:0008168">
    <property type="term" value="F:methyltransferase activity"/>
    <property type="evidence" value="ECO:0007669"/>
    <property type="project" value="TreeGrafter"/>
</dbReference>
<dbReference type="GO" id="GO:0016765">
    <property type="term" value="F:transferase activity, transferring alkyl or aryl (other than methyl) groups"/>
    <property type="evidence" value="ECO:0007669"/>
    <property type="project" value="UniProtKB-UniRule"/>
</dbReference>
<dbReference type="GO" id="GO:0002098">
    <property type="term" value="P:tRNA wobble uridine modification"/>
    <property type="evidence" value="ECO:0007669"/>
    <property type="project" value="InterPro"/>
</dbReference>
<dbReference type="CDD" id="cd02440">
    <property type="entry name" value="AdoMet_MTases"/>
    <property type="match status" value="1"/>
</dbReference>
<dbReference type="FunFam" id="3.40.50.150:FF:000080">
    <property type="entry name" value="tRNA U34 carboxymethyltransferase"/>
    <property type="match status" value="1"/>
</dbReference>
<dbReference type="Gene3D" id="3.40.50.150">
    <property type="entry name" value="Vaccinia Virus protein VP39"/>
    <property type="match status" value="1"/>
</dbReference>
<dbReference type="HAMAP" id="MF_01590">
    <property type="entry name" value="tRNA_carboxymethyltr_CmoB"/>
    <property type="match status" value="1"/>
</dbReference>
<dbReference type="InterPro" id="IPR010017">
    <property type="entry name" value="CmoB"/>
</dbReference>
<dbReference type="InterPro" id="IPR027555">
    <property type="entry name" value="Mo5U34_MeTrfas-like"/>
</dbReference>
<dbReference type="InterPro" id="IPR029063">
    <property type="entry name" value="SAM-dependent_MTases_sf"/>
</dbReference>
<dbReference type="NCBIfam" id="NF011650">
    <property type="entry name" value="PRK15068.1"/>
    <property type="match status" value="1"/>
</dbReference>
<dbReference type="NCBIfam" id="TIGR00452">
    <property type="entry name" value="tRNA 5-methoxyuridine(34)/uridine 5-oxyacetic acid(34) synthase CmoB"/>
    <property type="match status" value="1"/>
</dbReference>
<dbReference type="PANTHER" id="PTHR43464">
    <property type="entry name" value="METHYLTRANSFERASE"/>
    <property type="match status" value="1"/>
</dbReference>
<dbReference type="PANTHER" id="PTHR43464:SF95">
    <property type="entry name" value="TRNA U34 CARBOXYMETHYLTRANSFERASE"/>
    <property type="match status" value="1"/>
</dbReference>
<dbReference type="Pfam" id="PF08003">
    <property type="entry name" value="Methyltransf_9"/>
    <property type="match status" value="1"/>
</dbReference>
<dbReference type="SUPFAM" id="SSF53335">
    <property type="entry name" value="S-adenosyl-L-methionine-dependent methyltransferases"/>
    <property type="match status" value="1"/>
</dbReference>
<proteinExistence type="inferred from homology"/>
<feature type="chain" id="PRO_1000201305" description="tRNA U34 carboxymethyltransferase">
    <location>
        <begin position="1"/>
        <end position="323"/>
    </location>
</feature>
<feature type="binding site" evidence="1">
    <location>
        <position position="91"/>
    </location>
    <ligand>
        <name>carboxy-S-adenosyl-L-methionine</name>
        <dbReference type="ChEBI" id="CHEBI:134278"/>
    </ligand>
</feature>
<feature type="binding site" evidence="1">
    <location>
        <position position="105"/>
    </location>
    <ligand>
        <name>carboxy-S-adenosyl-L-methionine</name>
        <dbReference type="ChEBI" id="CHEBI:134278"/>
    </ligand>
</feature>
<feature type="binding site" evidence="1">
    <location>
        <position position="110"/>
    </location>
    <ligand>
        <name>carboxy-S-adenosyl-L-methionine</name>
        <dbReference type="ChEBI" id="CHEBI:134278"/>
    </ligand>
</feature>
<feature type="binding site" evidence="1">
    <location>
        <position position="130"/>
    </location>
    <ligand>
        <name>carboxy-S-adenosyl-L-methionine</name>
        <dbReference type="ChEBI" id="CHEBI:134278"/>
    </ligand>
</feature>
<feature type="binding site" evidence="1">
    <location>
        <begin position="152"/>
        <end position="154"/>
    </location>
    <ligand>
        <name>carboxy-S-adenosyl-L-methionine</name>
        <dbReference type="ChEBI" id="CHEBI:134278"/>
    </ligand>
</feature>
<feature type="binding site" evidence="1">
    <location>
        <begin position="181"/>
        <end position="182"/>
    </location>
    <ligand>
        <name>carboxy-S-adenosyl-L-methionine</name>
        <dbReference type="ChEBI" id="CHEBI:134278"/>
    </ligand>
</feature>
<feature type="binding site" evidence="1">
    <location>
        <position position="196"/>
    </location>
    <ligand>
        <name>carboxy-S-adenosyl-L-methionine</name>
        <dbReference type="ChEBI" id="CHEBI:134278"/>
    </ligand>
</feature>
<feature type="binding site" evidence="1">
    <location>
        <position position="200"/>
    </location>
    <ligand>
        <name>carboxy-S-adenosyl-L-methionine</name>
        <dbReference type="ChEBI" id="CHEBI:134278"/>
    </ligand>
</feature>
<feature type="binding site" evidence="1">
    <location>
        <position position="315"/>
    </location>
    <ligand>
        <name>carboxy-S-adenosyl-L-methionine</name>
        <dbReference type="ChEBI" id="CHEBI:134278"/>
    </ligand>
</feature>
<organism>
    <name type="scientific">Salmonella dublin (strain CT_02021853)</name>
    <dbReference type="NCBI Taxonomy" id="439851"/>
    <lineage>
        <taxon>Bacteria</taxon>
        <taxon>Pseudomonadati</taxon>
        <taxon>Pseudomonadota</taxon>
        <taxon>Gammaproteobacteria</taxon>
        <taxon>Enterobacterales</taxon>
        <taxon>Enterobacteriaceae</taxon>
        <taxon>Salmonella</taxon>
    </lineage>
</organism>
<name>CMOB_SALDC</name>
<comment type="function">
    <text evidence="1">Catalyzes carboxymethyl transfer from carboxy-S-adenosyl-L-methionine (Cx-SAM) to 5-hydroxyuridine (ho5U) to form 5-carboxymethoxyuridine (cmo5U) at position 34 in tRNAs.</text>
</comment>
<comment type="catalytic activity">
    <reaction evidence="1">
        <text>carboxy-S-adenosyl-L-methionine + 5-hydroxyuridine(34) in tRNA = 5-carboxymethoxyuridine(34) in tRNA + S-adenosyl-L-homocysteine + H(+)</text>
        <dbReference type="Rhea" id="RHEA:52848"/>
        <dbReference type="Rhea" id="RHEA-COMP:13381"/>
        <dbReference type="Rhea" id="RHEA-COMP:13383"/>
        <dbReference type="ChEBI" id="CHEBI:15378"/>
        <dbReference type="ChEBI" id="CHEBI:57856"/>
        <dbReference type="ChEBI" id="CHEBI:134278"/>
        <dbReference type="ChEBI" id="CHEBI:136877"/>
        <dbReference type="ChEBI" id="CHEBI:136879"/>
    </reaction>
</comment>
<comment type="subunit">
    <text evidence="1">Homotetramer.</text>
</comment>
<comment type="similarity">
    <text evidence="1">Belongs to the class I-like SAM-binding methyltransferase superfamily. CmoB family.</text>
</comment>
<keyword id="KW-0808">Transferase</keyword>
<keyword id="KW-0819">tRNA processing</keyword>
<reference key="1">
    <citation type="journal article" date="2011" name="J. Bacteriol.">
        <title>Comparative genomics of 28 Salmonella enterica isolates: evidence for CRISPR-mediated adaptive sublineage evolution.</title>
        <authorList>
            <person name="Fricke W.F."/>
            <person name="Mammel M.K."/>
            <person name="McDermott P.F."/>
            <person name="Tartera C."/>
            <person name="White D.G."/>
            <person name="Leclerc J.E."/>
            <person name="Ravel J."/>
            <person name="Cebula T.A."/>
        </authorList>
    </citation>
    <scope>NUCLEOTIDE SEQUENCE [LARGE SCALE GENOMIC DNA]</scope>
    <source>
        <strain>CT_02021853</strain>
    </source>
</reference>
<protein>
    <recommendedName>
        <fullName evidence="1">tRNA U34 carboxymethyltransferase</fullName>
        <ecNumber evidence="1">2.5.1.-</ecNumber>
    </recommendedName>
</protein>
<gene>
    <name evidence="1" type="primary">cmoB</name>
    <name type="ordered locus">SeD_A1341</name>
</gene>